<gene>
    <name evidence="1" type="primary">gatB</name>
    <name type="ordered locus">Rpic_3695</name>
</gene>
<protein>
    <recommendedName>
        <fullName evidence="1">Aspartyl/glutamyl-tRNA(Asn/Gln) amidotransferase subunit B</fullName>
        <shortName evidence="1">Asp/Glu-ADT subunit B</shortName>
        <ecNumber evidence="1">6.3.5.-</ecNumber>
    </recommendedName>
</protein>
<accession>B2U7W0</accession>
<proteinExistence type="inferred from homology"/>
<feature type="chain" id="PRO_1000095235" description="Aspartyl/glutamyl-tRNA(Asn/Gln) amidotransferase subunit B">
    <location>
        <begin position="1"/>
        <end position="488"/>
    </location>
</feature>
<name>GATB_RALPJ</name>
<dbReference type="EC" id="6.3.5.-" evidence="1"/>
<dbReference type="EMBL" id="CP001068">
    <property type="protein sequence ID" value="ACD28813.1"/>
    <property type="molecule type" value="Genomic_DNA"/>
</dbReference>
<dbReference type="SMR" id="B2U7W0"/>
<dbReference type="STRING" id="402626.Rpic_3695"/>
<dbReference type="KEGG" id="rpi:Rpic_3695"/>
<dbReference type="eggNOG" id="COG0064">
    <property type="taxonomic scope" value="Bacteria"/>
</dbReference>
<dbReference type="HOGENOM" id="CLU_019240_1_1_4"/>
<dbReference type="GO" id="GO:0050566">
    <property type="term" value="F:asparaginyl-tRNA synthase (glutamine-hydrolyzing) activity"/>
    <property type="evidence" value="ECO:0007669"/>
    <property type="project" value="RHEA"/>
</dbReference>
<dbReference type="GO" id="GO:0005524">
    <property type="term" value="F:ATP binding"/>
    <property type="evidence" value="ECO:0007669"/>
    <property type="project" value="UniProtKB-KW"/>
</dbReference>
<dbReference type="GO" id="GO:0050567">
    <property type="term" value="F:glutaminyl-tRNA synthase (glutamine-hydrolyzing) activity"/>
    <property type="evidence" value="ECO:0007669"/>
    <property type="project" value="UniProtKB-UniRule"/>
</dbReference>
<dbReference type="GO" id="GO:0070681">
    <property type="term" value="P:glutaminyl-tRNAGln biosynthesis via transamidation"/>
    <property type="evidence" value="ECO:0007669"/>
    <property type="project" value="TreeGrafter"/>
</dbReference>
<dbReference type="GO" id="GO:0006412">
    <property type="term" value="P:translation"/>
    <property type="evidence" value="ECO:0007669"/>
    <property type="project" value="UniProtKB-UniRule"/>
</dbReference>
<dbReference type="FunFam" id="1.10.10.410:FF:000001">
    <property type="entry name" value="Aspartyl/glutamyl-tRNA(Asn/Gln) amidotransferase subunit B"/>
    <property type="match status" value="1"/>
</dbReference>
<dbReference type="FunFam" id="1.10.150.380:FF:000001">
    <property type="entry name" value="Aspartyl/glutamyl-tRNA(Asn/Gln) amidotransferase subunit B"/>
    <property type="match status" value="1"/>
</dbReference>
<dbReference type="Gene3D" id="1.10.10.410">
    <property type="match status" value="1"/>
</dbReference>
<dbReference type="Gene3D" id="1.10.150.380">
    <property type="entry name" value="GatB domain, N-terminal subdomain"/>
    <property type="match status" value="1"/>
</dbReference>
<dbReference type="HAMAP" id="MF_00121">
    <property type="entry name" value="GatB"/>
    <property type="match status" value="1"/>
</dbReference>
<dbReference type="InterPro" id="IPR017959">
    <property type="entry name" value="Asn/Gln-tRNA_amidoTrfase_suB/E"/>
</dbReference>
<dbReference type="InterPro" id="IPR006075">
    <property type="entry name" value="Asn/Gln-tRNA_Trfase_suB/E_cat"/>
</dbReference>
<dbReference type="InterPro" id="IPR018027">
    <property type="entry name" value="Asn/Gln_amidotransferase"/>
</dbReference>
<dbReference type="InterPro" id="IPR003789">
    <property type="entry name" value="Asn/Gln_tRNA_amidoTrase-B-like"/>
</dbReference>
<dbReference type="InterPro" id="IPR004413">
    <property type="entry name" value="GatB"/>
</dbReference>
<dbReference type="InterPro" id="IPR042114">
    <property type="entry name" value="GatB_C_1"/>
</dbReference>
<dbReference type="InterPro" id="IPR023168">
    <property type="entry name" value="GatB_Yqey_C_2"/>
</dbReference>
<dbReference type="InterPro" id="IPR017958">
    <property type="entry name" value="Gln-tRNA_amidoTrfase_suB_CS"/>
</dbReference>
<dbReference type="InterPro" id="IPR014746">
    <property type="entry name" value="Gln_synth/guanido_kin_cat_dom"/>
</dbReference>
<dbReference type="NCBIfam" id="TIGR00133">
    <property type="entry name" value="gatB"/>
    <property type="match status" value="1"/>
</dbReference>
<dbReference type="NCBIfam" id="NF004012">
    <property type="entry name" value="PRK05477.1-2"/>
    <property type="match status" value="1"/>
</dbReference>
<dbReference type="NCBIfam" id="NF004014">
    <property type="entry name" value="PRK05477.1-4"/>
    <property type="match status" value="1"/>
</dbReference>
<dbReference type="NCBIfam" id="NF004015">
    <property type="entry name" value="PRK05477.1-5"/>
    <property type="match status" value="1"/>
</dbReference>
<dbReference type="PANTHER" id="PTHR11659">
    <property type="entry name" value="GLUTAMYL-TRNA GLN AMIDOTRANSFERASE SUBUNIT B MITOCHONDRIAL AND PROKARYOTIC PET112-RELATED"/>
    <property type="match status" value="1"/>
</dbReference>
<dbReference type="PANTHER" id="PTHR11659:SF0">
    <property type="entry name" value="GLUTAMYL-TRNA(GLN) AMIDOTRANSFERASE SUBUNIT B, MITOCHONDRIAL"/>
    <property type="match status" value="1"/>
</dbReference>
<dbReference type="Pfam" id="PF02934">
    <property type="entry name" value="GatB_N"/>
    <property type="match status" value="1"/>
</dbReference>
<dbReference type="Pfam" id="PF02637">
    <property type="entry name" value="GatB_Yqey"/>
    <property type="match status" value="1"/>
</dbReference>
<dbReference type="SMART" id="SM00845">
    <property type="entry name" value="GatB_Yqey"/>
    <property type="match status" value="1"/>
</dbReference>
<dbReference type="SUPFAM" id="SSF89095">
    <property type="entry name" value="GatB/YqeY motif"/>
    <property type="match status" value="1"/>
</dbReference>
<dbReference type="SUPFAM" id="SSF55931">
    <property type="entry name" value="Glutamine synthetase/guanido kinase"/>
    <property type="match status" value="1"/>
</dbReference>
<dbReference type="PROSITE" id="PS01234">
    <property type="entry name" value="GATB"/>
    <property type="match status" value="1"/>
</dbReference>
<reference key="1">
    <citation type="submission" date="2008-05" db="EMBL/GenBank/DDBJ databases">
        <title>Complete sequence of chromosome 1 of Ralstonia pickettii 12J.</title>
        <authorList>
            <person name="Lucas S."/>
            <person name="Copeland A."/>
            <person name="Lapidus A."/>
            <person name="Glavina del Rio T."/>
            <person name="Dalin E."/>
            <person name="Tice H."/>
            <person name="Bruce D."/>
            <person name="Goodwin L."/>
            <person name="Pitluck S."/>
            <person name="Meincke L."/>
            <person name="Brettin T."/>
            <person name="Detter J.C."/>
            <person name="Han C."/>
            <person name="Kuske C.R."/>
            <person name="Schmutz J."/>
            <person name="Larimer F."/>
            <person name="Land M."/>
            <person name="Hauser L."/>
            <person name="Kyrpides N."/>
            <person name="Mikhailova N."/>
            <person name="Marsh T."/>
            <person name="Richardson P."/>
        </authorList>
    </citation>
    <scope>NUCLEOTIDE SEQUENCE [LARGE SCALE GENOMIC DNA]</scope>
    <source>
        <strain>12J</strain>
    </source>
</reference>
<keyword id="KW-0067">ATP-binding</keyword>
<keyword id="KW-0436">Ligase</keyword>
<keyword id="KW-0547">Nucleotide-binding</keyword>
<keyword id="KW-0648">Protein biosynthesis</keyword>
<evidence type="ECO:0000255" key="1">
    <source>
        <dbReference type="HAMAP-Rule" id="MF_00121"/>
    </source>
</evidence>
<organism>
    <name type="scientific">Ralstonia pickettii (strain 12J)</name>
    <dbReference type="NCBI Taxonomy" id="402626"/>
    <lineage>
        <taxon>Bacteria</taxon>
        <taxon>Pseudomonadati</taxon>
        <taxon>Pseudomonadota</taxon>
        <taxon>Betaproteobacteria</taxon>
        <taxon>Burkholderiales</taxon>
        <taxon>Burkholderiaceae</taxon>
        <taxon>Ralstonia</taxon>
    </lineage>
</organism>
<sequence>MQWEVVIGLETHTQLSTVSKIFSGASTAFGAAPNTQAAPVDLALPGVLPVLNKGAVERAIVFGLAIGAKIAPKSIFARKNYFYPDLPKGYQISQYEIPVVQGGTLTFQVEGKNGQPGYEKTVQLTRAHLEEDAGKSLHEDFAGMTGIDLNRAGTPLLEIVTEPDMRSAAEAVAYAKALHALVMWLGICDGNMQEGSFRCDANVSVRRGPDAPFGTRCEIKNLNSFRFLEEAINYEVRRQIELIEDGGTVVQETRLYDPDRKETRSMRSKEDAQDYRYFPDPDLLPLVIGDDWIERVRATLPELPAAMAARFESAYGLPKYDASILTATKATAAYFEAVVADAGAANAKAAANWIMGEVASNLNRADLDIDAAPVSPAQLAKLLARIADGTISNNTAKKDVFPAMWAGEHGGDADAIIAEKGLKQMSDSGELEKIIDDVLAANAKSVEEFRAGKEKAFNALVGQAMKATRGKANPAQVNDLLKKKLGAA</sequence>
<comment type="function">
    <text evidence="1">Allows the formation of correctly charged Asn-tRNA(Asn) or Gln-tRNA(Gln) through the transamidation of misacylated Asp-tRNA(Asn) or Glu-tRNA(Gln) in organisms which lack either or both of asparaginyl-tRNA or glutaminyl-tRNA synthetases. The reaction takes place in the presence of glutamine and ATP through an activated phospho-Asp-tRNA(Asn) or phospho-Glu-tRNA(Gln).</text>
</comment>
<comment type="catalytic activity">
    <reaction evidence="1">
        <text>L-glutamyl-tRNA(Gln) + L-glutamine + ATP + H2O = L-glutaminyl-tRNA(Gln) + L-glutamate + ADP + phosphate + H(+)</text>
        <dbReference type="Rhea" id="RHEA:17521"/>
        <dbReference type="Rhea" id="RHEA-COMP:9681"/>
        <dbReference type="Rhea" id="RHEA-COMP:9684"/>
        <dbReference type="ChEBI" id="CHEBI:15377"/>
        <dbReference type="ChEBI" id="CHEBI:15378"/>
        <dbReference type="ChEBI" id="CHEBI:29985"/>
        <dbReference type="ChEBI" id="CHEBI:30616"/>
        <dbReference type="ChEBI" id="CHEBI:43474"/>
        <dbReference type="ChEBI" id="CHEBI:58359"/>
        <dbReference type="ChEBI" id="CHEBI:78520"/>
        <dbReference type="ChEBI" id="CHEBI:78521"/>
        <dbReference type="ChEBI" id="CHEBI:456216"/>
    </reaction>
</comment>
<comment type="catalytic activity">
    <reaction evidence="1">
        <text>L-aspartyl-tRNA(Asn) + L-glutamine + ATP + H2O = L-asparaginyl-tRNA(Asn) + L-glutamate + ADP + phosphate + 2 H(+)</text>
        <dbReference type="Rhea" id="RHEA:14513"/>
        <dbReference type="Rhea" id="RHEA-COMP:9674"/>
        <dbReference type="Rhea" id="RHEA-COMP:9677"/>
        <dbReference type="ChEBI" id="CHEBI:15377"/>
        <dbReference type="ChEBI" id="CHEBI:15378"/>
        <dbReference type="ChEBI" id="CHEBI:29985"/>
        <dbReference type="ChEBI" id="CHEBI:30616"/>
        <dbReference type="ChEBI" id="CHEBI:43474"/>
        <dbReference type="ChEBI" id="CHEBI:58359"/>
        <dbReference type="ChEBI" id="CHEBI:78515"/>
        <dbReference type="ChEBI" id="CHEBI:78516"/>
        <dbReference type="ChEBI" id="CHEBI:456216"/>
    </reaction>
</comment>
<comment type="subunit">
    <text evidence="1">Heterotrimer of A, B and C subunits.</text>
</comment>
<comment type="similarity">
    <text evidence="1">Belongs to the GatB/GatE family. GatB subfamily.</text>
</comment>